<proteinExistence type="inferred from homology"/>
<gene>
    <name evidence="1" type="primary">pheS</name>
    <name type="ordered locus">Bphyt_2752</name>
</gene>
<protein>
    <recommendedName>
        <fullName evidence="1">Phenylalanine--tRNA ligase alpha subunit</fullName>
        <ecNumber evidence="1">6.1.1.20</ecNumber>
    </recommendedName>
    <alternativeName>
        <fullName evidence="1">Phenylalanyl-tRNA synthetase alpha subunit</fullName>
        <shortName evidence="1">PheRS</shortName>
    </alternativeName>
</protein>
<feature type="chain" id="PRO_1000114852" description="Phenylalanine--tRNA ligase alpha subunit">
    <location>
        <begin position="1"/>
        <end position="337"/>
    </location>
</feature>
<feature type="binding site" evidence="1">
    <location>
        <position position="258"/>
    </location>
    <ligand>
        <name>Mg(2+)</name>
        <dbReference type="ChEBI" id="CHEBI:18420"/>
        <note>shared with beta subunit</note>
    </ligand>
</feature>
<evidence type="ECO:0000255" key="1">
    <source>
        <dbReference type="HAMAP-Rule" id="MF_00281"/>
    </source>
</evidence>
<accession>B2SZF8</accession>
<dbReference type="EC" id="6.1.1.20" evidence="1"/>
<dbReference type="EMBL" id="CP001052">
    <property type="protein sequence ID" value="ACD17146.1"/>
    <property type="molecule type" value="Genomic_DNA"/>
</dbReference>
<dbReference type="RefSeq" id="WP_012433737.1">
    <property type="nucleotide sequence ID" value="NC_010681.1"/>
</dbReference>
<dbReference type="SMR" id="B2SZF8"/>
<dbReference type="STRING" id="398527.Bphyt_2752"/>
<dbReference type="KEGG" id="bpy:Bphyt_2752"/>
<dbReference type="eggNOG" id="COG0016">
    <property type="taxonomic scope" value="Bacteria"/>
</dbReference>
<dbReference type="HOGENOM" id="CLU_025086_0_1_4"/>
<dbReference type="Proteomes" id="UP000001739">
    <property type="component" value="Chromosome 1"/>
</dbReference>
<dbReference type="GO" id="GO:0005737">
    <property type="term" value="C:cytoplasm"/>
    <property type="evidence" value="ECO:0007669"/>
    <property type="project" value="UniProtKB-SubCell"/>
</dbReference>
<dbReference type="GO" id="GO:0005524">
    <property type="term" value="F:ATP binding"/>
    <property type="evidence" value="ECO:0007669"/>
    <property type="project" value="UniProtKB-UniRule"/>
</dbReference>
<dbReference type="GO" id="GO:0000287">
    <property type="term" value="F:magnesium ion binding"/>
    <property type="evidence" value="ECO:0007669"/>
    <property type="project" value="UniProtKB-UniRule"/>
</dbReference>
<dbReference type="GO" id="GO:0004826">
    <property type="term" value="F:phenylalanine-tRNA ligase activity"/>
    <property type="evidence" value="ECO:0007669"/>
    <property type="project" value="UniProtKB-UniRule"/>
</dbReference>
<dbReference type="GO" id="GO:0000049">
    <property type="term" value="F:tRNA binding"/>
    <property type="evidence" value="ECO:0007669"/>
    <property type="project" value="InterPro"/>
</dbReference>
<dbReference type="GO" id="GO:0006432">
    <property type="term" value="P:phenylalanyl-tRNA aminoacylation"/>
    <property type="evidence" value="ECO:0007669"/>
    <property type="project" value="UniProtKB-UniRule"/>
</dbReference>
<dbReference type="CDD" id="cd00496">
    <property type="entry name" value="PheRS_alpha_core"/>
    <property type="match status" value="1"/>
</dbReference>
<dbReference type="FunFam" id="3.30.930.10:FF:000003">
    <property type="entry name" value="Phenylalanine--tRNA ligase alpha subunit"/>
    <property type="match status" value="1"/>
</dbReference>
<dbReference type="Gene3D" id="3.30.930.10">
    <property type="entry name" value="Bira Bifunctional Protein, Domain 2"/>
    <property type="match status" value="1"/>
</dbReference>
<dbReference type="HAMAP" id="MF_00281">
    <property type="entry name" value="Phe_tRNA_synth_alpha1"/>
    <property type="match status" value="1"/>
</dbReference>
<dbReference type="InterPro" id="IPR006195">
    <property type="entry name" value="aa-tRNA-synth_II"/>
</dbReference>
<dbReference type="InterPro" id="IPR045864">
    <property type="entry name" value="aa-tRNA-synth_II/BPL/LPL"/>
</dbReference>
<dbReference type="InterPro" id="IPR004529">
    <property type="entry name" value="Phe-tRNA-synth_IIc_asu"/>
</dbReference>
<dbReference type="InterPro" id="IPR004188">
    <property type="entry name" value="Phe-tRNA_ligase_II_N"/>
</dbReference>
<dbReference type="InterPro" id="IPR022911">
    <property type="entry name" value="Phe_tRNA_ligase_alpha1_bac"/>
</dbReference>
<dbReference type="InterPro" id="IPR002319">
    <property type="entry name" value="Phenylalanyl-tRNA_Synthase"/>
</dbReference>
<dbReference type="InterPro" id="IPR010978">
    <property type="entry name" value="tRNA-bd_arm"/>
</dbReference>
<dbReference type="NCBIfam" id="TIGR00468">
    <property type="entry name" value="pheS"/>
    <property type="match status" value="1"/>
</dbReference>
<dbReference type="PANTHER" id="PTHR11538:SF41">
    <property type="entry name" value="PHENYLALANINE--TRNA LIGASE, MITOCHONDRIAL"/>
    <property type="match status" value="1"/>
</dbReference>
<dbReference type="PANTHER" id="PTHR11538">
    <property type="entry name" value="PHENYLALANYL-TRNA SYNTHETASE"/>
    <property type="match status" value="1"/>
</dbReference>
<dbReference type="Pfam" id="PF02912">
    <property type="entry name" value="Phe_tRNA-synt_N"/>
    <property type="match status" value="1"/>
</dbReference>
<dbReference type="Pfam" id="PF01409">
    <property type="entry name" value="tRNA-synt_2d"/>
    <property type="match status" value="1"/>
</dbReference>
<dbReference type="SUPFAM" id="SSF55681">
    <property type="entry name" value="Class II aaRS and biotin synthetases"/>
    <property type="match status" value="1"/>
</dbReference>
<dbReference type="SUPFAM" id="SSF46589">
    <property type="entry name" value="tRNA-binding arm"/>
    <property type="match status" value="1"/>
</dbReference>
<dbReference type="PROSITE" id="PS50862">
    <property type="entry name" value="AA_TRNA_LIGASE_II"/>
    <property type="match status" value="1"/>
</dbReference>
<keyword id="KW-0030">Aminoacyl-tRNA synthetase</keyword>
<keyword id="KW-0067">ATP-binding</keyword>
<keyword id="KW-0963">Cytoplasm</keyword>
<keyword id="KW-0436">Ligase</keyword>
<keyword id="KW-0460">Magnesium</keyword>
<keyword id="KW-0479">Metal-binding</keyword>
<keyword id="KW-0547">Nucleotide-binding</keyword>
<keyword id="KW-0648">Protein biosynthesis</keyword>
<organism>
    <name type="scientific">Paraburkholderia phytofirmans (strain DSM 17436 / LMG 22146 / PsJN)</name>
    <name type="common">Burkholderia phytofirmans</name>
    <dbReference type="NCBI Taxonomy" id="398527"/>
    <lineage>
        <taxon>Bacteria</taxon>
        <taxon>Pseudomonadati</taxon>
        <taxon>Pseudomonadota</taxon>
        <taxon>Betaproteobacteria</taxon>
        <taxon>Burkholderiales</taxon>
        <taxon>Burkholderiaceae</taxon>
        <taxon>Paraburkholderia</taxon>
    </lineage>
</organism>
<sequence length="337" mass="38047">MDLDQIVADAQKAFAEASDVTTLENEKARFLGKSGALTELLKGLGKLDPETRKSEGARINLVKQQVEAALTARRQALADVLLNQRLAAEAIDVTLPGRGTGAGSLHPVMRTWERVEQIFRTIGFDVADGPEIETDWYNFTSLNSPENHPARSMQDTFYVDGKDADGRQLLLRTHTSPMQVRYARTNTPPIKVIVPGRTYRVDSDATHSPMFNQVEGLWIDENISFADLKGVYTDFLKKFFERDDILVRFRPSYFPFTEPSAEIDMLFETGKNAGKWLEISGSGQVHPTVIRNMGLDPDRYIGFAFGSGLERLTMLRYGVQDLRLFFENDLRFLRQFA</sequence>
<reference key="1">
    <citation type="journal article" date="2011" name="J. Bacteriol.">
        <title>Complete genome sequence of the plant growth-promoting endophyte Burkholderia phytofirmans strain PsJN.</title>
        <authorList>
            <person name="Weilharter A."/>
            <person name="Mitter B."/>
            <person name="Shin M.V."/>
            <person name="Chain P.S."/>
            <person name="Nowak J."/>
            <person name="Sessitsch A."/>
        </authorList>
    </citation>
    <scope>NUCLEOTIDE SEQUENCE [LARGE SCALE GENOMIC DNA]</scope>
    <source>
        <strain>DSM 17436 / LMG 22146 / PsJN</strain>
    </source>
</reference>
<comment type="catalytic activity">
    <reaction evidence="1">
        <text>tRNA(Phe) + L-phenylalanine + ATP = L-phenylalanyl-tRNA(Phe) + AMP + diphosphate + H(+)</text>
        <dbReference type="Rhea" id="RHEA:19413"/>
        <dbReference type="Rhea" id="RHEA-COMP:9668"/>
        <dbReference type="Rhea" id="RHEA-COMP:9699"/>
        <dbReference type="ChEBI" id="CHEBI:15378"/>
        <dbReference type="ChEBI" id="CHEBI:30616"/>
        <dbReference type="ChEBI" id="CHEBI:33019"/>
        <dbReference type="ChEBI" id="CHEBI:58095"/>
        <dbReference type="ChEBI" id="CHEBI:78442"/>
        <dbReference type="ChEBI" id="CHEBI:78531"/>
        <dbReference type="ChEBI" id="CHEBI:456215"/>
        <dbReference type="EC" id="6.1.1.20"/>
    </reaction>
</comment>
<comment type="cofactor">
    <cofactor evidence="1">
        <name>Mg(2+)</name>
        <dbReference type="ChEBI" id="CHEBI:18420"/>
    </cofactor>
    <text evidence="1">Binds 2 magnesium ions per tetramer.</text>
</comment>
<comment type="subunit">
    <text evidence="1">Tetramer of two alpha and two beta subunits.</text>
</comment>
<comment type="subcellular location">
    <subcellularLocation>
        <location evidence="1">Cytoplasm</location>
    </subcellularLocation>
</comment>
<comment type="similarity">
    <text evidence="1">Belongs to the class-II aminoacyl-tRNA synthetase family. Phe-tRNA synthetase alpha subunit type 1 subfamily.</text>
</comment>
<name>SYFA_PARPJ</name>